<feature type="propeptide" id="PRO_0000031145" evidence="1">
    <location>
        <begin position="1"/>
        <end position="2"/>
    </location>
</feature>
<feature type="chain" id="PRO_0000031146" description="Ribulose bisphosphate carboxylase large chain">
    <location>
        <begin position="3"/>
        <end position="469" status="greater than"/>
    </location>
</feature>
<feature type="active site" description="Proton acceptor" evidence="1">
    <location>
        <position position="175"/>
    </location>
</feature>
<feature type="active site" description="Proton acceptor" evidence="1">
    <location>
        <position position="294"/>
    </location>
</feature>
<feature type="binding site" description="in homodimeric partner" evidence="1">
    <location>
        <position position="123"/>
    </location>
    <ligand>
        <name>substrate</name>
    </ligand>
</feature>
<feature type="binding site" evidence="1">
    <location>
        <position position="173"/>
    </location>
    <ligand>
        <name>substrate</name>
    </ligand>
</feature>
<feature type="binding site" evidence="1">
    <location>
        <position position="177"/>
    </location>
    <ligand>
        <name>substrate</name>
    </ligand>
</feature>
<feature type="binding site" description="via carbamate group" evidence="1">
    <location>
        <position position="201"/>
    </location>
    <ligand>
        <name>Mg(2+)</name>
        <dbReference type="ChEBI" id="CHEBI:18420"/>
    </ligand>
</feature>
<feature type="binding site" evidence="1">
    <location>
        <position position="203"/>
    </location>
    <ligand>
        <name>Mg(2+)</name>
        <dbReference type="ChEBI" id="CHEBI:18420"/>
    </ligand>
</feature>
<feature type="binding site" evidence="1">
    <location>
        <position position="204"/>
    </location>
    <ligand>
        <name>Mg(2+)</name>
        <dbReference type="ChEBI" id="CHEBI:18420"/>
    </ligand>
</feature>
<feature type="binding site" evidence="1">
    <location>
        <position position="295"/>
    </location>
    <ligand>
        <name>substrate</name>
    </ligand>
</feature>
<feature type="binding site" evidence="1">
    <location>
        <position position="327"/>
    </location>
    <ligand>
        <name>substrate</name>
    </ligand>
</feature>
<feature type="binding site" evidence="1">
    <location>
        <position position="379"/>
    </location>
    <ligand>
        <name>substrate</name>
    </ligand>
</feature>
<feature type="site" description="Transition state stabilizer" evidence="1">
    <location>
        <position position="334"/>
    </location>
</feature>
<feature type="modified residue" description="N-acetylproline" evidence="1">
    <location>
        <position position="3"/>
    </location>
</feature>
<feature type="modified residue" description="N6,N6,N6-trimethyllysine" evidence="1">
    <location>
        <position position="14"/>
    </location>
</feature>
<feature type="modified residue" description="N6-carboxylysine" evidence="1">
    <location>
        <position position="201"/>
    </location>
</feature>
<feature type="disulfide bond" description="Interchain; in linked form" evidence="1">
    <location>
        <position position="247"/>
    </location>
</feature>
<feature type="non-terminal residue">
    <location>
        <position position="469"/>
    </location>
</feature>
<evidence type="ECO:0000255" key="1">
    <source>
        <dbReference type="HAMAP-Rule" id="MF_01338"/>
    </source>
</evidence>
<gene>
    <name evidence="1" type="primary">rbcL</name>
</gene>
<organism>
    <name type="scientific">Brexia madagascariensis</name>
    <dbReference type="NCBI Taxonomy" id="39394"/>
    <lineage>
        <taxon>Eukaryota</taxon>
        <taxon>Viridiplantae</taxon>
        <taxon>Streptophyta</taxon>
        <taxon>Embryophyta</taxon>
        <taxon>Tracheophyta</taxon>
        <taxon>Spermatophyta</taxon>
        <taxon>Magnoliopsida</taxon>
        <taxon>eudicotyledons</taxon>
        <taxon>Gunneridae</taxon>
        <taxon>Pentapetalae</taxon>
        <taxon>rosids</taxon>
        <taxon>fabids</taxon>
        <taxon>Celastrales</taxon>
        <taxon>Celastraceae</taxon>
        <taxon>Brexia</taxon>
    </lineage>
</organism>
<accession>Q31738</accession>
<sequence length="469" mass="52056">MSPQTETKASVGFKAGVKDYKLNYYTPDYETKDTDILAAFRVTPQPGVPPEEAGAAVAAESSTGTWTTVWTDGLTSLDRYKGRCYHIEPVAGEENQYIPYVAYPLDLFEEGSVTNMFTSIVGNVFGFKALRALRLEDLRIPPAYSKTFQGPPHGIQVERDKLNKYGRPLLGCTIKPKLGLSAKNYGRAVYECLRGGLDFTKDDENVNSQPFMRWRDRFLFCAEALYKAQAETGEIKGHYLNATAGTCEEMMKRAVFARELGVPIVMHDYLTGGFTANTSLAHYCRDNGLLLHIHRAMHAVIDRQKNHGMHFRVLAKALRMSGGDHVHAGTVVGKLEGERDITLGFVDLLRDDFIEKDRSRGIYFTQDWVSLPGVLPVASGGIHVWHMPALTEIFGDDSVLQFGGGTLGHPWGNAPGAVANRVALEACVQARNEGRDLAREGNEIIREASKWSPELAAACEVWKEIKFEF</sequence>
<proteinExistence type="inferred from homology"/>
<reference key="1">
    <citation type="journal article" date="1993" name="Ann. Mo. Bot. Gard.">
        <title>Phylogenetic relationships among members of Saxifragaceae sensu lato based on rbcL sequence data.</title>
        <authorList>
            <person name="Morgan D.R."/>
            <person name="Soltis D.E."/>
        </authorList>
        <dbReference type="AGRICOLA" id="IND93053812"/>
    </citation>
    <scope>NUCLEOTIDE SEQUENCE [GENOMIC DNA]</scope>
    <source>
        <tissue>Leaf</tissue>
    </source>
</reference>
<dbReference type="EC" id="4.1.1.39" evidence="1"/>
<dbReference type="EMBL" id="L11176">
    <property type="protein sequence ID" value="AAA84093.1"/>
    <property type="molecule type" value="Genomic_DNA"/>
</dbReference>
<dbReference type="SMR" id="Q31738"/>
<dbReference type="GO" id="GO:0009507">
    <property type="term" value="C:chloroplast"/>
    <property type="evidence" value="ECO:0007669"/>
    <property type="project" value="UniProtKB-SubCell"/>
</dbReference>
<dbReference type="GO" id="GO:0000287">
    <property type="term" value="F:magnesium ion binding"/>
    <property type="evidence" value="ECO:0007669"/>
    <property type="project" value="InterPro"/>
</dbReference>
<dbReference type="GO" id="GO:0004497">
    <property type="term" value="F:monooxygenase activity"/>
    <property type="evidence" value="ECO:0007669"/>
    <property type="project" value="UniProtKB-KW"/>
</dbReference>
<dbReference type="GO" id="GO:0016984">
    <property type="term" value="F:ribulose-bisphosphate carboxylase activity"/>
    <property type="evidence" value="ECO:0007669"/>
    <property type="project" value="UniProtKB-EC"/>
</dbReference>
<dbReference type="GO" id="GO:0009853">
    <property type="term" value="P:photorespiration"/>
    <property type="evidence" value="ECO:0007669"/>
    <property type="project" value="UniProtKB-KW"/>
</dbReference>
<dbReference type="GO" id="GO:0019253">
    <property type="term" value="P:reductive pentose-phosphate cycle"/>
    <property type="evidence" value="ECO:0007669"/>
    <property type="project" value="UniProtKB-KW"/>
</dbReference>
<dbReference type="CDD" id="cd08212">
    <property type="entry name" value="RuBisCO_large_I"/>
    <property type="match status" value="1"/>
</dbReference>
<dbReference type="FunFam" id="3.20.20.110:FF:000001">
    <property type="entry name" value="Ribulose bisphosphate carboxylase large chain"/>
    <property type="match status" value="1"/>
</dbReference>
<dbReference type="FunFam" id="3.30.70.150:FF:000001">
    <property type="entry name" value="Ribulose bisphosphate carboxylase large chain"/>
    <property type="match status" value="1"/>
</dbReference>
<dbReference type="Gene3D" id="3.20.20.110">
    <property type="entry name" value="Ribulose bisphosphate carboxylase, large subunit, C-terminal domain"/>
    <property type="match status" value="1"/>
</dbReference>
<dbReference type="Gene3D" id="3.30.70.150">
    <property type="entry name" value="RuBisCO large subunit, N-terminal domain"/>
    <property type="match status" value="1"/>
</dbReference>
<dbReference type="HAMAP" id="MF_01338">
    <property type="entry name" value="RuBisCO_L_type1"/>
    <property type="match status" value="1"/>
</dbReference>
<dbReference type="InterPro" id="IPR033966">
    <property type="entry name" value="RuBisCO"/>
</dbReference>
<dbReference type="InterPro" id="IPR020878">
    <property type="entry name" value="RuBisCo_large_chain_AS"/>
</dbReference>
<dbReference type="InterPro" id="IPR000685">
    <property type="entry name" value="RuBisCO_lsu_C"/>
</dbReference>
<dbReference type="InterPro" id="IPR036376">
    <property type="entry name" value="RuBisCO_lsu_C_sf"/>
</dbReference>
<dbReference type="InterPro" id="IPR017443">
    <property type="entry name" value="RuBisCO_lsu_fd_N"/>
</dbReference>
<dbReference type="InterPro" id="IPR036422">
    <property type="entry name" value="RuBisCO_lsu_N_sf"/>
</dbReference>
<dbReference type="InterPro" id="IPR020888">
    <property type="entry name" value="RuBisCO_lsuI"/>
</dbReference>
<dbReference type="NCBIfam" id="NF003252">
    <property type="entry name" value="PRK04208.1"/>
    <property type="match status" value="1"/>
</dbReference>
<dbReference type="PANTHER" id="PTHR42704">
    <property type="entry name" value="RIBULOSE BISPHOSPHATE CARBOXYLASE"/>
    <property type="match status" value="1"/>
</dbReference>
<dbReference type="PANTHER" id="PTHR42704:SF19">
    <property type="entry name" value="RIBULOSE BISPHOSPHATE CARBOXYLASE LARGE CHAIN"/>
    <property type="match status" value="1"/>
</dbReference>
<dbReference type="Pfam" id="PF00016">
    <property type="entry name" value="RuBisCO_large"/>
    <property type="match status" value="1"/>
</dbReference>
<dbReference type="Pfam" id="PF02788">
    <property type="entry name" value="RuBisCO_large_N"/>
    <property type="match status" value="1"/>
</dbReference>
<dbReference type="SFLD" id="SFLDG01052">
    <property type="entry name" value="RuBisCO"/>
    <property type="match status" value="1"/>
</dbReference>
<dbReference type="SFLD" id="SFLDS00014">
    <property type="entry name" value="RuBisCO"/>
    <property type="match status" value="1"/>
</dbReference>
<dbReference type="SFLD" id="SFLDG00301">
    <property type="entry name" value="RuBisCO-like_proteins"/>
    <property type="match status" value="1"/>
</dbReference>
<dbReference type="SUPFAM" id="SSF51649">
    <property type="entry name" value="RuBisCo, C-terminal domain"/>
    <property type="match status" value="1"/>
</dbReference>
<dbReference type="SUPFAM" id="SSF54966">
    <property type="entry name" value="RuBisCO, large subunit, small (N-terminal) domain"/>
    <property type="match status" value="1"/>
</dbReference>
<dbReference type="PROSITE" id="PS00157">
    <property type="entry name" value="RUBISCO_LARGE"/>
    <property type="match status" value="1"/>
</dbReference>
<geneLocation type="chloroplast"/>
<name>RBL_BREMA</name>
<protein>
    <recommendedName>
        <fullName evidence="1">Ribulose bisphosphate carboxylase large chain</fullName>
        <shortName evidence="1">RuBisCO large subunit</shortName>
        <ecNumber evidence="1">4.1.1.39</ecNumber>
    </recommendedName>
</protein>
<keyword id="KW-0007">Acetylation</keyword>
<keyword id="KW-0113">Calvin cycle</keyword>
<keyword id="KW-0120">Carbon dioxide fixation</keyword>
<keyword id="KW-0150">Chloroplast</keyword>
<keyword id="KW-1015">Disulfide bond</keyword>
<keyword id="KW-0456">Lyase</keyword>
<keyword id="KW-0460">Magnesium</keyword>
<keyword id="KW-0479">Metal-binding</keyword>
<keyword id="KW-0488">Methylation</keyword>
<keyword id="KW-0503">Monooxygenase</keyword>
<keyword id="KW-0560">Oxidoreductase</keyword>
<keyword id="KW-0601">Photorespiration</keyword>
<keyword id="KW-0602">Photosynthesis</keyword>
<keyword id="KW-0934">Plastid</keyword>
<comment type="function">
    <text evidence="1">RuBisCO catalyzes two reactions: the carboxylation of D-ribulose 1,5-bisphosphate, the primary event in carbon dioxide fixation, as well as the oxidative fragmentation of the pentose substrate in the photorespiration process. Both reactions occur simultaneously and in competition at the same active site.</text>
</comment>
<comment type="catalytic activity">
    <reaction evidence="1">
        <text>2 (2R)-3-phosphoglycerate + 2 H(+) = D-ribulose 1,5-bisphosphate + CO2 + H2O</text>
        <dbReference type="Rhea" id="RHEA:23124"/>
        <dbReference type="ChEBI" id="CHEBI:15377"/>
        <dbReference type="ChEBI" id="CHEBI:15378"/>
        <dbReference type="ChEBI" id="CHEBI:16526"/>
        <dbReference type="ChEBI" id="CHEBI:57870"/>
        <dbReference type="ChEBI" id="CHEBI:58272"/>
        <dbReference type="EC" id="4.1.1.39"/>
    </reaction>
</comment>
<comment type="catalytic activity">
    <reaction evidence="1">
        <text>D-ribulose 1,5-bisphosphate + O2 = 2-phosphoglycolate + (2R)-3-phosphoglycerate + 2 H(+)</text>
        <dbReference type="Rhea" id="RHEA:36631"/>
        <dbReference type="ChEBI" id="CHEBI:15378"/>
        <dbReference type="ChEBI" id="CHEBI:15379"/>
        <dbReference type="ChEBI" id="CHEBI:57870"/>
        <dbReference type="ChEBI" id="CHEBI:58033"/>
        <dbReference type="ChEBI" id="CHEBI:58272"/>
    </reaction>
</comment>
<comment type="cofactor">
    <cofactor evidence="1">
        <name>Mg(2+)</name>
        <dbReference type="ChEBI" id="CHEBI:18420"/>
    </cofactor>
    <text evidence="1">Binds 1 Mg(2+) ion per subunit.</text>
</comment>
<comment type="subunit">
    <text evidence="1">Heterohexadecamer of 8 large chains and 8 small chains; disulfide-linked. The disulfide link is formed within the large subunit homodimers.</text>
</comment>
<comment type="subcellular location">
    <subcellularLocation>
        <location>Plastid</location>
        <location>Chloroplast</location>
    </subcellularLocation>
</comment>
<comment type="PTM">
    <text evidence="1">The disulfide bond which can form in the large chain dimeric partners within the hexadecamer appears to be associated with oxidative stress and protein turnover.</text>
</comment>
<comment type="miscellaneous">
    <text evidence="1">The basic functional RuBisCO is composed of a large chain homodimer in a 'head-to-tail' conformation. In form I RuBisCO this homodimer is arranged in a barrel-like tetramer with the small subunits forming a tetrameric 'cap' on each end of the 'barrel'.</text>
</comment>
<comment type="similarity">
    <text evidence="1">Belongs to the RuBisCO large chain family. Type I subfamily.</text>
</comment>